<comment type="function">
    <text evidence="3">Protamines substitute for histones in the chromatin of sperm during the haploid phase of spermatogenesis. They compact sperm DNA into a highly condensed, stable and inactive complex. This protamine condenses spermiogenic chromatin in a pattern which comprises fibers with a progressively larger diameter and lamellae that finally undergo definitive coalescence.</text>
</comment>
<comment type="subunit">
    <text evidence="2">Cross-linked by interchain disulfide bonds around the DNA-helix.</text>
</comment>
<comment type="subcellular location">
    <subcellularLocation>
        <location evidence="3">Nucleus</location>
    </subcellularLocation>
    <subcellularLocation>
        <location evidence="3">Chromosome</location>
    </subcellularLocation>
</comment>
<comment type="tissue specificity">
    <text evidence="3 4">Testis.</text>
</comment>
<name>HSPC_ELECI</name>
<sequence length="84" mass="10612">FCGSKPRCRPRCKPRCRSRSKKRCRRCRRRCSRIVKKCCRRRSKCCRRRRRCPCPCPRKKLRCCKRRPKRRCPKRKKKRCRRKC</sequence>
<proteinExistence type="evidence at protein level"/>
<protein>
    <recommendedName>
        <fullName>Cysteine-rich protamine</fullName>
    </recommendedName>
</protein>
<evidence type="ECO:0000250" key="1"/>
<evidence type="ECO:0000250" key="2">
    <source>
        <dbReference type="UniProtKB" id="P02318"/>
    </source>
</evidence>
<evidence type="ECO:0000269" key="3">
    <source>
    </source>
</evidence>
<evidence type="ECO:0000305" key="4"/>
<keyword id="KW-0158">Chromosome</keyword>
<keyword id="KW-0217">Developmental protein</keyword>
<keyword id="KW-0221">Differentiation</keyword>
<keyword id="KW-0903">Direct protein sequencing</keyword>
<keyword id="KW-1015">Disulfide bond</keyword>
<keyword id="KW-0226">DNA condensation</keyword>
<keyword id="KW-0238">DNA-binding</keyword>
<keyword id="KW-0544">Nucleosome core</keyword>
<keyword id="KW-0539">Nucleus</keyword>
<keyword id="KW-0744">Spermatogenesis</keyword>
<reference key="1">
    <citation type="journal article" date="2002" name="Eur. J. Cell Biol.">
        <title>Chromatin condensation, cysteine-rich protamine, and establishment of disulphide interprotamine bonds during spermiogenesis of Eledone cirrhosa (Cephalopoda).</title>
        <authorList>
            <person name="Gimenez-Bonafe P."/>
            <person name="Ribes E."/>
            <person name="Sautiere P."/>
            <person name="Gonzalez A."/>
            <person name="Kasinsky H.E."/>
            <person name="Kouach M."/>
            <person name="Sautiere P.-E."/>
            <person name="Ausio J."/>
            <person name="Chiva M."/>
        </authorList>
    </citation>
    <scope>PROTEIN SEQUENCE</scope>
    <scope>FUNCTION</scope>
    <scope>SUBCELLULAR LOCATION</scope>
    <scope>TISSUE SPECIFICITY</scope>
    <source>
        <tissue>Sperm</tissue>
    </source>
</reference>
<organism evidence="4">
    <name type="scientific">Eledone cirrhosa</name>
    <name type="common">Curled octopus</name>
    <name type="synonym">Ozaena cirrosa</name>
    <dbReference type="NCBI Taxonomy" id="102876"/>
    <lineage>
        <taxon>Eukaryota</taxon>
        <taxon>Metazoa</taxon>
        <taxon>Spiralia</taxon>
        <taxon>Lophotrochozoa</taxon>
        <taxon>Mollusca</taxon>
        <taxon>Cephalopoda</taxon>
        <taxon>Coleoidea</taxon>
        <taxon>Octopodiformes</taxon>
        <taxon>Octopoda</taxon>
        <taxon>Incirrata</taxon>
        <taxon>Octopodidae</taxon>
        <taxon>Eledone</taxon>
    </lineage>
</organism>
<feature type="chain" id="PRO_0000106640" description="Cysteine-rich protamine">
    <location>
        <begin position="1"/>
        <end position="84"/>
    </location>
</feature>
<feature type="disulfide bond" description="Interchain (with C-31)" evidence="1">
    <location>
        <position position="12"/>
    </location>
</feature>
<feature type="disulfide bond" evidence="1">
    <location>
        <begin position="16"/>
        <end position="24"/>
    </location>
</feature>
<feature type="disulfide bond" description="Interchain (with C-12)" evidence="1">
    <location>
        <position position="31"/>
    </location>
</feature>
<feature type="disulfide bond" description="Interchain (with C-63)" evidence="1">
    <location>
        <position position="63"/>
    </location>
</feature>
<feature type="disulfide bond" evidence="1">
    <location>
        <begin position="64"/>
        <end position="80"/>
    </location>
</feature>
<accession>P83183</accession>
<dbReference type="SMR" id="P83183"/>
<dbReference type="GO" id="GO:0000786">
    <property type="term" value="C:nucleosome"/>
    <property type="evidence" value="ECO:0007669"/>
    <property type="project" value="UniProtKB-KW"/>
</dbReference>
<dbReference type="GO" id="GO:0005634">
    <property type="term" value="C:nucleus"/>
    <property type="evidence" value="ECO:0007669"/>
    <property type="project" value="UniProtKB-SubCell"/>
</dbReference>
<dbReference type="GO" id="GO:0003677">
    <property type="term" value="F:DNA binding"/>
    <property type="evidence" value="ECO:0007669"/>
    <property type="project" value="UniProtKB-KW"/>
</dbReference>
<dbReference type="GO" id="GO:0030154">
    <property type="term" value="P:cell differentiation"/>
    <property type="evidence" value="ECO:0007669"/>
    <property type="project" value="UniProtKB-KW"/>
</dbReference>
<dbReference type="GO" id="GO:0030261">
    <property type="term" value="P:chromosome condensation"/>
    <property type="evidence" value="ECO:0007669"/>
    <property type="project" value="UniProtKB-KW"/>
</dbReference>
<dbReference type="GO" id="GO:0007283">
    <property type="term" value="P:spermatogenesis"/>
    <property type="evidence" value="ECO:0007669"/>
    <property type="project" value="UniProtKB-KW"/>
</dbReference>